<reference key="1">
    <citation type="journal article" date="2002" name="Nature">
        <title>Comparison of the genomes of two Xanthomonas pathogens with differing host specificities.</title>
        <authorList>
            <person name="da Silva A.C.R."/>
            <person name="Ferro J.A."/>
            <person name="Reinach F.C."/>
            <person name="Farah C.S."/>
            <person name="Furlan L.R."/>
            <person name="Quaggio R.B."/>
            <person name="Monteiro-Vitorello C.B."/>
            <person name="Van Sluys M.A."/>
            <person name="Almeida N.F. Jr."/>
            <person name="Alves L.M.C."/>
            <person name="do Amaral A.M."/>
            <person name="Bertolini M.C."/>
            <person name="Camargo L.E.A."/>
            <person name="Camarotte G."/>
            <person name="Cannavan F."/>
            <person name="Cardozo J."/>
            <person name="Chambergo F."/>
            <person name="Ciapina L.P."/>
            <person name="Cicarelli R.M.B."/>
            <person name="Coutinho L.L."/>
            <person name="Cursino-Santos J.R."/>
            <person name="El-Dorry H."/>
            <person name="Faria J.B."/>
            <person name="Ferreira A.J.S."/>
            <person name="Ferreira R.C.C."/>
            <person name="Ferro M.I.T."/>
            <person name="Formighieri E.F."/>
            <person name="Franco M.C."/>
            <person name="Greggio C.C."/>
            <person name="Gruber A."/>
            <person name="Katsuyama A.M."/>
            <person name="Kishi L.T."/>
            <person name="Leite R.P."/>
            <person name="Lemos E.G.M."/>
            <person name="Lemos M.V.F."/>
            <person name="Locali E.C."/>
            <person name="Machado M.A."/>
            <person name="Madeira A.M.B.N."/>
            <person name="Martinez-Rossi N.M."/>
            <person name="Martins E.C."/>
            <person name="Meidanis J."/>
            <person name="Menck C.F.M."/>
            <person name="Miyaki C.Y."/>
            <person name="Moon D.H."/>
            <person name="Moreira L.M."/>
            <person name="Novo M.T.M."/>
            <person name="Okura V.K."/>
            <person name="Oliveira M.C."/>
            <person name="Oliveira V.R."/>
            <person name="Pereira H.A."/>
            <person name="Rossi A."/>
            <person name="Sena J.A.D."/>
            <person name="Silva C."/>
            <person name="de Souza R.F."/>
            <person name="Spinola L.A.F."/>
            <person name="Takita M.A."/>
            <person name="Tamura R.E."/>
            <person name="Teixeira E.C."/>
            <person name="Tezza R.I.D."/>
            <person name="Trindade dos Santos M."/>
            <person name="Truffi D."/>
            <person name="Tsai S.M."/>
            <person name="White F.F."/>
            <person name="Setubal J.C."/>
            <person name="Kitajima J.P."/>
        </authorList>
    </citation>
    <scope>NUCLEOTIDE SEQUENCE [LARGE SCALE GENOMIC DNA]</scope>
    <source>
        <strain>306</strain>
    </source>
</reference>
<evidence type="ECO:0000255" key="1">
    <source>
        <dbReference type="HAMAP-Rule" id="MF_00689"/>
    </source>
</evidence>
<protein>
    <recommendedName>
        <fullName evidence="1">Aspartate/glutamate leucyltransferase</fullName>
        <ecNumber evidence="1">2.3.2.29</ecNumber>
    </recommendedName>
</protein>
<gene>
    <name evidence="1" type="primary">bpt</name>
    <name type="synonym">ate1</name>
    <name type="ordered locus">XAC1239</name>
</gene>
<sequence length="251" mass="28697">MAIHADTHDDLRLFQTGEHACGYWSGRQARDLVLDPHDPRLGAIYPQALAWGFRRSGDLVYRPHCERCRACVPVRIAVDAFHPDRSQRRCLARNRDLVVRVVAAERTDEQLALYRQYLKHRHPGGGMDQHGATEFDQFLIGGWSHGRFLEIREPAIAHLPGRLLAVAVTDVTEHALSAVYTFYAPEAAARSLGTFAILQQIQWAQRERRAHLYLGYWIDGHAKMNYKRRFSALEAYDGRHWRGLPAHASVD</sequence>
<name>BPT_XANAC</name>
<accession>Q8PN34</accession>
<comment type="function">
    <text evidence="1">Functions in the N-end rule pathway of protein degradation where it conjugates Leu from its aminoacyl-tRNA to the N-termini of proteins containing an N-terminal aspartate or glutamate.</text>
</comment>
<comment type="catalytic activity">
    <reaction evidence="1">
        <text>N-terminal L-glutamyl-[protein] + L-leucyl-tRNA(Leu) = N-terminal L-leucyl-L-glutamyl-[protein] + tRNA(Leu) + H(+)</text>
        <dbReference type="Rhea" id="RHEA:50412"/>
        <dbReference type="Rhea" id="RHEA-COMP:9613"/>
        <dbReference type="Rhea" id="RHEA-COMP:9622"/>
        <dbReference type="Rhea" id="RHEA-COMP:12664"/>
        <dbReference type="Rhea" id="RHEA-COMP:12668"/>
        <dbReference type="ChEBI" id="CHEBI:15378"/>
        <dbReference type="ChEBI" id="CHEBI:64721"/>
        <dbReference type="ChEBI" id="CHEBI:78442"/>
        <dbReference type="ChEBI" id="CHEBI:78494"/>
        <dbReference type="ChEBI" id="CHEBI:133041"/>
        <dbReference type="EC" id="2.3.2.29"/>
    </reaction>
</comment>
<comment type="catalytic activity">
    <reaction evidence="1">
        <text>N-terminal L-aspartyl-[protein] + L-leucyl-tRNA(Leu) = N-terminal L-leucyl-L-aspartyl-[protein] + tRNA(Leu) + H(+)</text>
        <dbReference type="Rhea" id="RHEA:50420"/>
        <dbReference type="Rhea" id="RHEA-COMP:9613"/>
        <dbReference type="Rhea" id="RHEA-COMP:9622"/>
        <dbReference type="Rhea" id="RHEA-COMP:12669"/>
        <dbReference type="Rhea" id="RHEA-COMP:12674"/>
        <dbReference type="ChEBI" id="CHEBI:15378"/>
        <dbReference type="ChEBI" id="CHEBI:64720"/>
        <dbReference type="ChEBI" id="CHEBI:78442"/>
        <dbReference type="ChEBI" id="CHEBI:78494"/>
        <dbReference type="ChEBI" id="CHEBI:133042"/>
        <dbReference type="EC" id="2.3.2.29"/>
    </reaction>
</comment>
<comment type="subcellular location">
    <subcellularLocation>
        <location evidence="1">Cytoplasm</location>
    </subcellularLocation>
</comment>
<comment type="similarity">
    <text evidence="1">Belongs to the R-transferase family. Bpt subfamily.</text>
</comment>
<feature type="chain" id="PRO_0000195120" description="Aspartate/glutamate leucyltransferase">
    <location>
        <begin position="1"/>
        <end position="251"/>
    </location>
</feature>
<organism>
    <name type="scientific">Xanthomonas axonopodis pv. citri (strain 306)</name>
    <dbReference type="NCBI Taxonomy" id="190486"/>
    <lineage>
        <taxon>Bacteria</taxon>
        <taxon>Pseudomonadati</taxon>
        <taxon>Pseudomonadota</taxon>
        <taxon>Gammaproteobacteria</taxon>
        <taxon>Lysobacterales</taxon>
        <taxon>Lysobacteraceae</taxon>
        <taxon>Xanthomonas</taxon>
    </lineage>
</organism>
<proteinExistence type="inferred from homology"/>
<keyword id="KW-0012">Acyltransferase</keyword>
<keyword id="KW-0963">Cytoplasm</keyword>
<keyword id="KW-0808">Transferase</keyword>
<dbReference type="EC" id="2.3.2.29" evidence="1"/>
<dbReference type="EMBL" id="AE008923">
    <property type="protein sequence ID" value="AAM36111.1"/>
    <property type="molecule type" value="Genomic_DNA"/>
</dbReference>
<dbReference type="SMR" id="Q8PN34"/>
<dbReference type="KEGG" id="xac:XAC1239"/>
<dbReference type="eggNOG" id="COG2935">
    <property type="taxonomic scope" value="Bacteria"/>
</dbReference>
<dbReference type="HOGENOM" id="CLU_077607_0_0_6"/>
<dbReference type="Proteomes" id="UP000000576">
    <property type="component" value="Chromosome"/>
</dbReference>
<dbReference type="GO" id="GO:0005737">
    <property type="term" value="C:cytoplasm"/>
    <property type="evidence" value="ECO:0007669"/>
    <property type="project" value="UniProtKB-SubCell"/>
</dbReference>
<dbReference type="GO" id="GO:0004057">
    <property type="term" value="F:arginyl-tRNA--protein transferase activity"/>
    <property type="evidence" value="ECO:0007669"/>
    <property type="project" value="InterPro"/>
</dbReference>
<dbReference type="GO" id="GO:0008914">
    <property type="term" value="F:leucyl-tRNA--protein transferase activity"/>
    <property type="evidence" value="ECO:0007669"/>
    <property type="project" value="UniProtKB-UniRule"/>
</dbReference>
<dbReference type="GO" id="GO:0071596">
    <property type="term" value="P:ubiquitin-dependent protein catabolic process via the N-end rule pathway"/>
    <property type="evidence" value="ECO:0007669"/>
    <property type="project" value="InterPro"/>
</dbReference>
<dbReference type="HAMAP" id="MF_00689">
    <property type="entry name" value="Bpt"/>
    <property type="match status" value="1"/>
</dbReference>
<dbReference type="InterPro" id="IPR016181">
    <property type="entry name" value="Acyl_CoA_acyltransferase"/>
</dbReference>
<dbReference type="InterPro" id="IPR017138">
    <property type="entry name" value="Asp_Glu_LeuTrfase"/>
</dbReference>
<dbReference type="InterPro" id="IPR030700">
    <property type="entry name" value="N-end_Aminoacyl_Trfase"/>
</dbReference>
<dbReference type="InterPro" id="IPR007472">
    <property type="entry name" value="N-end_Aminoacyl_Trfase_C"/>
</dbReference>
<dbReference type="InterPro" id="IPR007471">
    <property type="entry name" value="N-end_Aminoacyl_Trfase_N"/>
</dbReference>
<dbReference type="NCBIfam" id="NF002341">
    <property type="entry name" value="PRK01305.1-1"/>
    <property type="match status" value="1"/>
</dbReference>
<dbReference type="NCBIfam" id="NF002342">
    <property type="entry name" value="PRK01305.1-3"/>
    <property type="match status" value="1"/>
</dbReference>
<dbReference type="NCBIfam" id="NF002346">
    <property type="entry name" value="PRK01305.2-3"/>
    <property type="match status" value="1"/>
</dbReference>
<dbReference type="PANTHER" id="PTHR21367">
    <property type="entry name" value="ARGININE-TRNA-PROTEIN TRANSFERASE 1"/>
    <property type="match status" value="1"/>
</dbReference>
<dbReference type="PANTHER" id="PTHR21367:SF1">
    <property type="entry name" value="ARGINYL-TRNA--PROTEIN TRANSFERASE 1"/>
    <property type="match status" value="1"/>
</dbReference>
<dbReference type="Pfam" id="PF04377">
    <property type="entry name" value="ATE_C"/>
    <property type="match status" value="1"/>
</dbReference>
<dbReference type="Pfam" id="PF04376">
    <property type="entry name" value="ATE_N"/>
    <property type="match status" value="1"/>
</dbReference>
<dbReference type="PIRSF" id="PIRSF037208">
    <property type="entry name" value="ATE_pro_prd"/>
    <property type="match status" value="1"/>
</dbReference>
<dbReference type="SUPFAM" id="SSF55729">
    <property type="entry name" value="Acyl-CoA N-acyltransferases (Nat)"/>
    <property type="match status" value="1"/>
</dbReference>